<keyword id="KW-0030">Aminoacyl-tRNA synthetase</keyword>
<keyword id="KW-0067">ATP-binding</keyword>
<keyword id="KW-0963">Cytoplasm</keyword>
<keyword id="KW-0436">Ligase</keyword>
<keyword id="KW-0479">Metal-binding</keyword>
<keyword id="KW-0547">Nucleotide-binding</keyword>
<keyword id="KW-0648">Protein biosynthesis</keyword>
<keyword id="KW-1185">Reference proteome</keyword>
<keyword id="KW-0694">RNA-binding</keyword>
<keyword id="KW-0820">tRNA-binding</keyword>
<keyword id="KW-0862">Zinc</keyword>
<evidence type="ECO:0000255" key="1">
    <source>
        <dbReference type="HAMAP-Rule" id="MF_00184"/>
    </source>
</evidence>
<evidence type="ECO:0000255" key="2">
    <source>
        <dbReference type="PROSITE-ProRule" id="PRU01228"/>
    </source>
</evidence>
<comment type="function">
    <text evidence="1">Catalyzes the attachment of threonine to tRNA(Thr) in a two-step reaction: L-threonine is first activated by ATP to form Thr-AMP and then transferred to the acceptor end of tRNA(Thr). Also edits incorrectly charged L-seryl-tRNA(Thr).</text>
</comment>
<comment type="catalytic activity">
    <reaction evidence="1">
        <text>tRNA(Thr) + L-threonine + ATP = L-threonyl-tRNA(Thr) + AMP + diphosphate + H(+)</text>
        <dbReference type="Rhea" id="RHEA:24624"/>
        <dbReference type="Rhea" id="RHEA-COMP:9670"/>
        <dbReference type="Rhea" id="RHEA-COMP:9704"/>
        <dbReference type="ChEBI" id="CHEBI:15378"/>
        <dbReference type="ChEBI" id="CHEBI:30616"/>
        <dbReference type="ChEBI" id="CHEBI:33019"/>
        <dbReference type="ChEBI" id="CHEBI:57926"/>
        <dbReference type="ChEBI" id="CHEBI:78442"/>
        <dbReference type="ChEBI" id="CHEBI:78534"/>
        <dbReference type="ChEBI" id="CHEBI:456215"/>
        <dbReference type="EC" id="6.1.1.3"/>
    </reaction>
</comment>
<comment type="cofactor">
    <cofactor evidence="1">
        <name>Zn(2+)</name>
        <dbReference type="ChEBI" id="CHEBI:29105"/>
    </cofactor>
    <text evidence="1">Binds 1 zinc ion per subunit.</text>
</comment>
<comment type="subunit">
    <text evidence="1">Homodimer.</text>
</comment>
<comment type="subcellular location">
    <subcellularLocation>
        <location evidence="1">Cytoplasm</location>
    </subcellularLocation>
</comment>
<comment type="similarity">
    <text evidence="1">Belongs to the class-II aminoacyl-tRNA synthetase family.</text>
</comment>
<sequence length="639" mass="72140">MIHITLPDGSQREFAGPVTVAEVAASIGSGLAKAALAGKIGDKVVDTSYQITQDSPLSIVTAKDADGLEVIRHSTAHLLAYAVKELFPDAQVTIGPVIENGFYYDFSYKRPFTPEDLAAIEKRMAELAAKDEPVVRRVLPRDEAVAYFKGLGEHYKAEIIASIPTNEDVSLYREGGFEDLCRGPHVPSTGKLKFFKLMKVAGAYWRGDHRNEMLQRVYGTAWATKEELQQYLHMLEEAEKRDHRKLGRELDLFHIDEHSPGTVFWHPKGWTLWQEVEQYMRRVYRDNGYQEVKGPQILDKTLWEKTGHWDKYRDNMFTTESEKRDYALKPMNCPGHILIFKQGIKSYRDLPLRYGEFGQCHRNEPTGGLHGIMRVRGFTQDDGHIFCTEDHILAECTAYTALLQKVYKNFGFHNIIYKVATRPEARIGSDESWDKAEHALMESLRASGCEFEIAPGDGAFYGPKIEYTLKDAIGRQWQCGTMQVDFSMPERLDAEYVGEDGGRHRPVMLHRAIVGSLERFIGILIEEHAGALPVWLAPVQVAVLNITDAQQDYCREIAAKLQKALPNQGLRVVTDLRNEKITYKIREHSLQKLPYILVAGDKEKAAGAVAVRARGNKDLGVMSLDAFVDLIAQDIASKV</sequence>
<proteinExistence type="inferred from homology"/>
<dbReference type="EC" id="6.1.1.3" evidence="1"/>
<dbReference type="EMBL" id="CP001392">
    <property type="protein sequence ID" value="ACM32910.1"/>
    <property type="molecule type" value="Genomic_DNA"/>
</dbReference>
<dbReference type="RefSeq" id="WP_015913045.1">
    <property type="nucleotide sequence ID" value="NC_011992.1"/>
</dbReference>
<dbReference type="SMR" id="B9MHX8"/>
<dbReference type="KEGG" id="dia:Dtpsy_1448"/>
<dbReference type="eggNOG" id="COG0441">
    <property type="taxonomic scope" value="Bacteria"/>
</dbReference>
<dbReference type="HOGENOM" id="CLU_008554_0_1_4"/>
<dbReference type="Proteomes" id="UP000000450">
    <property type="component" value="Chromosome"/>
</dbReference>
<dbReference type="GO" id="GO:0005829">
    <property type="term" value="C:cytosol"/>
    <property type="evidence" value="ECO:0007669"/>
    <property type="project" value="TreeGrafter"/>
</dbReference>
<dbReference type="GO" id="GO:0005524">
    <property type="term" value="F:ATP binding"/>
    <property type="evidence" value="ECO:0007669"/>
    <property type="project" value="UniProtKB-UniRule"/>
</dbReference>
<dbReference type="GO" id="GO:0046872">
    <property type="term" value="F:metal ion binding"/>
    <property type="evidence" value="ECO:0007669"/>
    <property type="project" value="UniProtKB-KW"/>
</dbReference>
<dbReference type="GO" id="GO:0004829">
    <property type="term" value="F:threonine-tRNA ligase activity"/>
    <property type="evidence" value="ECO:0007669"/>
    <property type="project" value="UniProtKB-UniRule"/>
</dbReference>
<dbReference type="GO" id="GO:0000049">
    <property type="term" value="F:tRNA binding"/>
    <property type="evidence" value="ECO:0007669"/>
    <property type="project" value="UniProtKB-KW"/>
</dbReference>
<dbReference type="GO" id="GO:0006435">
    <property type="term" value="P:threonyl-tRNA aminoacylation"/>
    <property type="evidence" value="ECO:0007669"/>
    <property type="project" value="UniProtKB-UniRule"/>
</dbReference>
<dbReference type="CDD" id="cd01667">
    <property type="entry name" value="TGS_ThrRS"/>
    <property type="match status" value="1"/>
</dbReference>
<dbReference type="CDD" id="cd00860">
    <property type="entry name" value="ThrRS_anticodon"/>
    <property type="match status" value="1"/>
</dbReference>
<dbReference type="CDD" id="cd00771">
    <property type="entry name" value="ThrRS_core"/>
    <property type="match status" value="1"/>
</dbReference>
<dbReference type="FunFam" id="3.10.20.30:FF:000005">
    <property type="entry name" value="Threonine--tRNA ligase"/>
    <property type="match status" value="1"/>
</dbReference>
<dbReference type="FunFam" id="3.30.54.20:FF:000002">
    <property type="entry name" value="Threonine--tRNA ligase"/>
    <property type="match status" value="1"/>
</dbReference>
<dbReference type="FunFam" id="3.30.930.10:FF:000002">
    <property type="entry name" value="Threonine--tRNA ligase"/>
    <property type="match status" value="1"/>
</dbReference>
<dbReference type="FunFam" id="3.40.50.800:FF:000001">
    <property type="entry name" value="Threonine--tRNA ligase"/>
    <property type="match status" value="1"/>
</dbReference>
<dbReference type="FunFam" id="3.30.980.10:FF:000005">
    <property type="entry name" value="Threonyl-tRNA synthetase, mitochondrial"/>
    <property type="match status" value="1"/>
</dbReference>
<dbReference type="Gene3D" id="3.10.20.30">
    <property type="match status" value="1"/>
</dbReference>
<dbReference type="Gene3D" id="3.30.54.20">
    <property type="match status" value="1"/>
</dbReference>
<dbReference type="Gene3D" id="3.40.50.800">
    <property type="entry name" value="Anticodon-binding domain"/>
    <property type="match status" value="1"/>
</dbReference>
<dbReference type="Gene3D" id="3.30.930.10">
    <property type="entry name" value="Bira Bifunctional Protein, Domain 2"/>
    <property type="match status" value="1"/>
</dbReference>
<dbReference type="Gene3D" id="3.30.980.10">
    <property type="entry name" value="Threonyl-trna Synthetase, Chain A, domain 2"/>
    <property type="match status" value="1"/>
</dbReference>
<dbReference type="HAMAP" id="MF_00184">
    <property type="entry name" value="Thr_tRNA_synth"/>
    <property type="match status" value="1"/>
</dbReference>
<dbReference type="InterPro" id="IPR002314">
    <property type="entry name" value="aa-tRNA-synt_IIb"/>
</dbReference>
<dbReference type="InterPro" id="IPR006195">
    <property type="entry name" value="aa-tRNA-synth_II"/>
</dbReference>
<dbReference type="InterPro" id="IPR045864">
    <property type="entry name" value="aa-tRNA-synth_II/BPL/LPL"/>
</dbReference>
<dbReference type="InterPro" id="IPR004154">
    <property type="entry name" value="Anticodon-bd"/>
</dbReference>
<dbReference type="InterPro" id="IPR036621">
    <property type="entry name" value="Anticodon-bd_dom_sf"/>
</dbReference>
<dbReference type="InterPro" id="IPR012675">
    <property type="entry name" value="Beta-grasp_dom_sf"/>
</dbReference>
<dbReference type="InterPro" id="IPR004095">
    <property type="entry name" value="TGS"/>
</dbReference>
<dbReference type="InterPro" id="IPR012676">
    <property type="entry name" value="TGS-like"/>
</dbReference>
<dbReference type="InterPro" id="IPR002320">
    <property type="entry name" value="Thr-tRNA-ligase_IIa"/>
</dbReference>
<dbReference type="InterPro" id="IPR018163">
    <property type="entry name" value="Thr/Ala-tRNA-synth_IIc_edit"/>
</dbReference>
<dbReference type="InterPro" id="IPR047246">
    <property type="entry name" value="ThrRS_anticodon"/>
</dbReference>
<dbReference type="InterPro" id="IPR033728">
    <property type="entry name" value="ThrRS_core"/>
</dbReference>
<dbReference type="InterPro" id="IPR012947">
    <property type="entry name" value="tRNA_SAD"/>
</dbReference>
<dbReference type="NCBIfam" id="TIGR00418">
    <property type="entry name" value="thrS"/>
    <property type="match status" value="1"/>
</dbReference>
<dbReference type="PANTHER" id="PTHR11451:SF44">
    <property type="entry name" value="THREONINE--TRNA LIGASE, CHLOROPLASTIC_MITOCHONDRIAL 2"/>
    <property type="match status" value="1"/>
</dbReference>
<dbReference type="PANTHER" id="PTHR11451">
    <property type="entry name" value="THREONINE-TRNA LIGASE"/>
    <property type="match status" value="1"/>
</dbReference>
<dbReference type="Pfam" id="PF03129">
    <property type="entry name" value="HGTP_anticodon"/>
    <property type="match status" value="1"/>
</dbReference>
<dbReference type="Pfam" id="PF02824">
    <property type="entry name" value="TGS"/>
    <property type="match status" value="1"/>
</dbReference>
<dbReference type="Pfam" id="PF00587">
    <property type="entry name" value="tRNA-synt_2b"/>
    <property type="match status" value="1"/>
</dbReference>
<dbReference type="Pfam" id="PF07973">
    <property type="entry name" value="tRNA_SAD"/>
    <property type="match status" value="1"/>
</dbReference>
<dbReference type="PRINTS" id="PR01047">
    <property type="entry name" value="TRNASYNTHTHR"/>
</dbReference>
<dbReference type="SMART" id="SM00863">
    <property type="entry name" value="tRNA_SAD"/>
    <property type="match status" value="1"/>
</dbReference>
<dbReference type="SUPFAM" id="SSF52954">
    <property type="entry name" value="Class II aaRS ABD-related"/>
    <property type="match status" value="1"/>
</dbReference>
<dbReference type="SUPFAM" id="SSF55681">
    <property type="entry name" value="Class II aaRS and biotin synthetases"/>
    <property type="match status" value="1"/>
</dbReference>
<dbReference type="SUPFAM" id="SSF81271">
    <property type="entry name" value="TGS-like"/>
    <property type="match status" value="1"/>
</dbReference>
<dbReference type="SUPFAM" id="SSF55186">
    <property type="entry name" value="ThrRS/AlaRS common domain"/>
    <property type="match status" value="1"/>
</dbReference>
<dbReference type="PROSITE" id="PS50862">
    <property type="entry name" value="AA_TRNA_LIGASE_II"/>
    <property type="match status" value="1"/>
</dbReference>
<dbReference type="PROSITE" id="PS51880">
    <property type="entry name" value="TGS"/>
    <property type="match status" value="1"/>
</dbReference>
<organism>
    <name type="scientific">Acidovorax ebreus (strain TPSY)</name>
    <name type="common">Diaphorobacter sp. (strain TPSY)</name>
    <dbReference type="NCBI Taxonomy" id="535289"/>
    <lineage>
        <taxon>Bacteria</taxon>
        <taxon>Pseudomonadati</taxon>
        <taxon>Pseudomonadota</taxon>
        <taxon>Betaproteobacteria</taxon>
        <taxon>Burkholderiales</taxon>
        <taxon>Comamonadaceae</taxon>
        <taxon>Diaphorobacter</taxon>
    </lineage>
</organism>
<protein>
    <recommendedName>
        <fullName evidence="1">Threonine--tRNA ligase</fullName>
        <ecNumber evidence="1">6.1.1.3</ecNumber>
    </recommendedName>
    <alternativeName>
        <fullName evidence="1">Threonyl-tRNA synthetase</fullName>
        <shortName evidence="1">ThrRS</shortName>
    </alternativeName>
</protein>
<accession>B9MHX8</accession>
<name>SYT_ACIET</name>
<gene>
    <name evidence="1" type="primary">thrS</name>
    <name type="ordered locus">Dtpsy_1448</name>
</gene>
<feature type="chain" id="PRO_1000199543" description="Threonine--tRNA ligase">
    <location>
        <begin position="1"/>
        <end position="639"/>
    </location>
</feature>
<feature type="domain" description="TGS" evidence="2">
    <location>
        <begin position="1"/>
        <end position="61"/>
    </location>
</feature>
<feature type="region of interest" description="Catalytic" evidence="1">
    <location>
        <begin position="242"/>
        <end position="533"/>
    </location>
</feature>
<feature type="binding site" evidence="1">
    <location>
        <position position="333"/>
    </location>
    <ligand>
        <name>Zn(2+)</name>
        <dbReference type="ChEBI" id="CHEBI:29105"/>
    </ligand>
</feature>
<feature type="binding site" evidence="1">
    <location>
        <position position="384"/>
    </location>
    <ligand>
        <name>Zn(2+)</name>
        <dbReference type="ChEBI" id="CHEBI:29105"/>
    </ligand>
</feature>
<feature type="binding site" evidence="1">
    <location>
        <position position="510"/>
    </location>
    <ligand>
        <name>Zn(2+)</name>
        <dbReference type="ChEBI" id="CHEBI:29105"/>
    </ligand>
</feature>
<reference key="1">
    <citation type="submission" date="2009-01" db="EMBL/GenBank/DDBJ databases">
        <title>Complete sequence of Diaphorobacter sp. TPSY.</title>
        <authorList>
            <consortium name="US DOE Joint Genome Institute"/>
            <person name="Lucas S."/>
            <person name="Copeland A."/>
            <person name="Lapidus A."/>
            <person name="Glavina del Rio T."/>
            <person name="Tice H."/>
            <person name="Bruce D."/>
            <person name="Goodwin L."/>
            <person name="Pitluck S."/>
            <person name="Chertkov O."/>
            <person name="Brettin T."/>
            <person name="Detter J.C."/>
            <person name="Han C."/>
            <person name="Larimer F."/>
            <person name="Land M."/>
            <person name="Hauser L."/>
            <person name="Kyrpides N."/>
            <person name="Mikhailova N."/>
            <person name="Coates J.D."/>
        </authorList>
    </citation>
    <scope>NUCLEOTIDE SEQUENCE [LARGE SCALE GENOMIC DNA]</scope>
    <source>
        <strain>TPSY</strain>
    </source>
</reference>